<protein>
    <recommendedName>
        <fullName evidence="1">Peroxiredoxin 2</fullName>
        <ecNumber evidence="1">1.11.1.24</ecNumber>
    </recommendedName>
    <alternativeName>
        <fullName evidence="1">Thioredoxin-dependent peroxiredoxin 2</fullName>
    </alternativeName>
</protein>
<evidence type="ECO:0000255" key="1">
    <source>
        <dbReference type="HAMAP-Rule" id="MF_00401"/>
    </source>
</evidence>
<dbReference type="EC" id="1.11.1.24" evidence="1"/>
<dbReference type="EMBL" id="AL445066">
    <property type="protein sequence ID" value="CAC12083.1"/>
    <property type="molecule type" value="Genomic_DNA"/>
</dbReference>
<dbReference type="SMR" id="Q9HJL3"/>
<dbReference type="STRING" id="273075.gene:9572172"/>
<dbReference type="PaxDb" id="273075-Ta0954m"/>
<dbReference type="EnsemblBacteria" id="CAC12083">
    <property type="protein sequence ID" value="CAC12083"/>
    <property type="gene ID" value="CAC12083"/>
</dbReference>
<dbReference type="KEGG" id="tac:Ta0954"/>
<dbReference type="eggNOG" id="arCOG00312">
    <property type="taxonomic scope" value="Archaea"/>
</dbReference>
<dbReference type="HOGENOM" id="CLU_042529_4_4_2"/>
<dbReference type="InParanoid" id="Q9HJL3"/>
<dbReference type="Proteomes" id="UP000001024">
    <property type="component" value="Chromosome"/>
</dbReference>
<dbReference type="GO" id="GO:0005829">
    <property type="term" value="C:cytosol"/>
    <property type="evidence" value="ECO:0007669"/>
    <property type="project" value="TreeGrafter"/>
</dbReference>
<dbReference type="GO" id="GO:0008379">
    <property type="term" value="F:thioredoxin peroxidase activity"/>
    <property type="evidence" value="ECO:0007669"/>
    <property type="project" value="TreeGrafter"/>
</dbReference>
<dbReference type="GO" id="GO:0045454">
    <property type="term" value="P:cell redox homeostasis"/>
    <property type="evidence" value="ECO:0007669"/>
    <property type="project" value="TreeGrafter"/>
</dbReference>
<dbReference type="GO" id="GO:0033554">
    <property type="term" value="P:cellular response to stress"/>
    <property type="evidence" value="ECO:0007669"/>
    <property type="project" value="TreeGrafter"/>
</dbReference>
<dbReference type="GO" id="GO:0042744">
    <property type="term" value="P:hydrogen peroxide catabolic process"/>
    <property type="evidence" value="ECO:0007669"/>
    <property type="project" value="TreeGrafter"/>
</dbReference>
<dbReference type="GO" id="GO:0006979">
    <property type="term" value="P:response to oxidative stress"/>
    <property type="evidence" value="ECO:0007669"/>
    <property type="project" value="TreeGrafter"/>
</dbReference>
<dbReference type="CDD" id="cd03016">
    <property type="entry name" value="PRX_1cys"/>
    <property type="match status" value="1"/>
</dbReference>
<dbReference type="FunFam" id="3.40.30.10:FF:000011">
    <property type="entry name" value="Peroxiredoxin PRX1"/>
    <property type="match status" value="1"/>
</dbReference>
<dbReference type="Gene3D" id="3.40.30.10">
    <property type="entry name" value="Glutaredoxin"/>
    <property type="match status" value="1"/>
</dbReference>
<dbReference type="HAMAP" id="MF_00401">
    <property type="entry name" value="Peroxiredoxin"/>
    <property type="match status" value="1"/>
</dbReference>
<dbReference type="InterPro" id="IPR000866">
    <property type="entry name" value="AhpC/TSA"/>
</dbReference>
<dbReference type="InterPro" id="IPR050217">
    <property type="entry name" value="Peroxiredoxin"/>
</dbReference>
<dbReference type="InterPro" id="IPR024706">
    <property type="entry name" value="Peroxiredoxin_AhpC-typ"/>
</dbReference>
<dbReference type="InterPro" id="IPR019479">
    <property type="entry name" value="Peroxiredoxin_C"/>
</dbReference>
<dbReference type="InterPro" id="IPR022915">
    <property type="entry name" value="Peroxiredoxin_TDXH"/>
</dbReference>
<dbReference type="InterPro" id="IPR045020">
    <property type="entry name" value="PRX_1cys"/>
</dbReference>
<dbReference type="InterPro" id="IPR036249">
    <property type="entry name" value="Thioredoxin-like_sf"/>
</dbReference>
<dbReference type="InterPro" id="IPR013766">
    <property type="entry name" value="Thioredoxin_domain"/>
</dbReference>
<dbReference type="NCBIfam" id="NF009668">
    <property type="entry name" value="PRK13189.1"/>
    <property type="match status" value="1"/>
</dbReference>
<dbReference type="NCBIfam" id="NF009669">
    <property type="entry name" value="PRK13190.1"/>
    <property type="match status" value="1"/>
</dbReference>
<dbReference type="PANTHER" id="PTHR10681">
    <property type="entry name" value="THIOREDOXIN PEROXIDASE"/>
    <property type="match status" value="1"/>
</dbReference>
<dbReference type="PANTHER" id="PTHR10681:SF128">
    <property type="entry name" value="THIOREDOXIN-DEPENDENT PEROXIDE REDUCTASE, MITOCHONDRIAL"/>
    <property type="match status" value="1"/>
</dbReference>
<dbReference type="Pfam" id="PF10417">
    <property type="entry name" value="1-cysPrx_C"/>
    <property type="match status" value="1"/>
</dbReference>
<dbReference type="Pfam" id="PF00578">
    <property type="entry name" value="AhpC-TSA"/>
    <property type="match status" value="1"/>
</dbReference>
<dbReference type="PIRSF" id="PIRSF000239">
    <property type="entry name" value="AHPC"/>
    <property type="match status" value="1"/>
</dbReference>
<dbReference type="SUPFAM" id="SSF52833">
    <property type="entry name" value="Thioredoxin-like"/>
    <property type="match status" value="1"/>
</dbReference>
<dbReference type="PROSITE" id="PS51352">
    <property type="entry name" value="THIOREDOXIN_2"/>
    <property type="match status" value="1"/>
</dbReference>
<organism>
    <name type="scientific">Thermoplasma acidophilum (strain ATCC 25905 / DSM 1728 / JCM 9062 / NBRC 15155 / AMRC-C165)</name>
    <dbReference type="NCBI Taxonomy" id="273075"/>
    <lineage>
        <taxon>Archaea</taxon>
        <taxon>Methanobacteriati</taxon>
        <taxon>Thermoplasmatota</taxon>
        <taxon>Thermoplasmata</taxon>
        <taxon>Thermoplasmatales</taxon>
        <taxon>Thermoplasmataceae</taxon>
        <taxon>Thermoplasma</taxon>
    </lineage>
</organism>
<proteinExistence type="inferred from homology"/>
<name>TDXH2_THEAC</name>
<reference key="1">
    <citation type="journal article" date="2000" name="Nature">
        <title>The genome sequence of the thermoacidophilic scavenger Thermoplasma acidophilum.</title>
        <authorList>
            <person name="Ruepp A."/>
            <person name="Graml W."/>
            <person name="Santos-Martinez M.-L."/>
            <person name="Koretke K.K."/>
            <person name="Volker C."/>
            <person name="Mewes H.-W."/>
            <person name="Frishman D."/>
            <person name="Stocker S."/>
            <person name="Lupas A.N."/>
            <person name="Baumeister W."/>
        </authorList>
    </citation>
    <scope>NUCLEOTIDE SEQUENCE [LARGE SCALE GENOMIC DNA]</scope>
    <source>
        <strain>ATCC 25905 / DSM 1728 / JCM 9062 / NBRC 15155 / AMRC-C165</strain>
    </source>
</reference>
<sequence>MGQKAPDFTVNTSKGPVTLSSYRGKWVLLFSHPGDFTPVCTTEFIAFTERYKDFQALGVELLGLSIDSVYSHIAWIRDIKEHFGIEIPFPIIADIDKEVARQYNLIDEKSGATVRGVFIIDPNQIVRWMIYYPAETGRNIDEIIRVIKALQFNWERKLATPANWQPGQEGIEGAPSTVDASLKRDGEPGVKTWYLKFVK</sequence>
<accession>Q9HJL3</accession>
<feature type="chain" id="PRO_0000135173" description="Peroxiredoxin 2">
    <location>
        <begin position="1"/>
        <end position="199"/>
    </location>
</feature>
<feature type="domain" description="Thioredoxin" evidence="1">
    <location>
        <begin position="1"/>
        <end position="152"/>
    </location>
</feature>
<feature type="active site" description="Cysteine sulfenic acid (-SOH) intermediate" evidence="1">
    <location>
        <position position="40"/>
    </location>
</feature>
<feature type="binding site" evidence="1">
    <location>
        <position position="115"/>
    </location>
    <ligand>
        <name>substrate</name>
    </ligand>
</feature>
<gene>
    <name type="ordered locus">Ta0954</name>
</gene>
<comment type="function">
    <text evidence="1">Thiol-specific peroxidase that catalyzes the reduction of hydrogen peroxide and organic hydroperoxides to water and alcohols, respectively. Plays a role in cell protection against oxidative stress by detoxifying peroxides.</text>
</comment>
<comment type="catalytic activity">
    <reaction evidence="1">
        <text>a hydroperoxide + [thioredoxin]-dithiol = an alcohol + [thioredoxin]-disulfide + H2O</text>
        <dbReference type="Rhea" id="RHEA:62620"/>
        <dbReference type="Rhea" id="RHEA-COMP:10698"/>
        <dbReference type="Rhea" id="RHEA-COMP:10700"/>
        <dbReference type="ChEBI" id="CHEBI:15377"/>
        <dbReference type="ChEBI" id="CHEBI:29950"/>
        <dbReference type="ChEBI" id="CHEBI:30879"/>
        <dbReference type="ChEBI" id="CHEBI:35924"/>
        <dbReference type="ChEBI" id="CHEBI:50058"/>
        <dbReference type="EC" id="1.11.1.24"/>
    </reaction>
</comment>
<comment type="subunit">
    <text evidence="1">Homodecamer. Pentamer of dimers that assemble into a ring structure.</text>
</comment>
<comment type="subcellular location">
    <subcellularLocation>
        <location evidence="1">Cytoplasm</location>
    </subcellularLocation>
</comment>
<comment type="miscellaneous">
    <text evidence="1">The active site is a conserved redox-active cysteine residue, the peroxidatic cysteine (C(P)), which makes the nucleophilic attack on the peroxide substrate. The peroxide oxidizes the C(P)-SH to cysteine sulfenic acid (C(P)-SOH), which then reacts with another cysteine residue, the resolving cysteine (C(R)), to form a disulfide bridge. The disulfide is subsequently reduced by an appropriate electron donor to complete the catalytic cycle. In this 1-Cys peroxiredoxin, no C(R) is present and C(P) instead forms a disulfide with a cysteine from another protein or with a small thiol molecule.</text>
</comment>
<comment type="similarity">
    <text evidence="1">Belongs to the peroxiredoxin family. Prx6 subfamily.</text>
</comment>
<keyword id="KW-0049">Antioxidant</keyword>
<keyword id="KW-0963">Cytoplasm</keyword>
<keyword id="KW-0560">Oxidoreductase</keyword>
<keyword id="KW-0575">Peroxidase</keyword>
<keyword id="KW-0676">Redox-active center</keyword>
<keyword id="KW-1185">Reference proteome</keyword>